<name>RK3_RHDSA</name>
<feature type="chain" id="PRO_0000353630" description="Large ribosomal subunit protein uL3c">
    <location>
        <begin position="1"/>
        <end position="208"/>
    </location>
</feature>
<feature type="region of interest" description="Disordered" evidence="2">
    <location>
        <begin position="129"/>
        <end position="165"/>
    </location>
</feature>
<proteinExistence type="inferred from homology"/>
<sequence>MIPGILGTKLGMTQIFDESGLAIPVTVIKAGPCILTQIKTQESDSYQAIQIGFSEVKESSLNKPLLGHLKKSQAPALKHLKEYRVKSVEGLEVAQKITLDSFEVGKTVSVSGKTIGKGFAGTVRRYSFTRGPMTHGSKNHREPGSIGQGSTPGKVHKGKKMAGRLGGKQSTIKNLEIVHVNTDNNILVVKGAVPGKKGNILSIQQEEI</sequence>
<comment type="function">
    <text evidence="1">One of the primary rRNA binding proteins, it binds directly near the 3'-end of the 23S rRNA, where it nucleates assembly of the 50S subunit.</text>
</comment>
<comment type="subunit">
    <text evidence="1">Part of the 50S ribosomal subunit.</text>
</comment>
<comment type="subcellular location">
    <subcellularLocation>
        <location>Plastid</location>
        <location>Chloroplast</location>
    </subcellularLocation>
</comment>
<comment type="similarity">
    <text evidence="3">Belongs to the universal ribosomal protein uL3 family.</text>
</comment>
<protein>
    <recommendedName>
        <fullName evidence="3">Large ribosomal subunit protein uL3c</fullName>
    </recommendedName>
    <alternativeName>
        <fullName>50S ribosomal protein L3, chloroplastic</fullName>
    </alternativeName>
</protein>
<evidence type="ECO:0000250" key="1"/>
<evidence type="ECO:0000256" key="2">
    <source>
        <dbReference type="SAM" id="MobiDB-lite"/>
    </source>
</evidence>
<evidence type="ECO:0000305" key="3"/>
<gene>
    <name type="primary">rpl3</name>
</gene>
<organism>
    <name type="scientific">Rhodomonas salina</name>
    <name type="common">Cryptomonas salina</name>
    <dbReference type="NCBI Taxonomy" id="52970"/>
    <lineage>
        <taxon>Eukaryota</taxon>
        <taxon>Cryptophyceae</taxon>
        <taxon>Pyrenomonadales</taxon>
        <taxon>Pyrenomonadaceae</taxon>
        <taxon>Rhodomonas</taxon>
    </lineage>
</organism>
<dbReference type="EMBL" id="EF508371">
    <property type="protein sequence ID" value="ABO70764.1"/>
    <property type="molecule type" value="Genomic_DNA"/>
</dbReference>
<dbReference type="RefSeq" id="YP_001293580.1">
    <property type="nucleotide sequence ID" value="NC_009573.1"/>
</dbReference>
<dbReference type="SMR" id="A6MW01"/>
<dbReference type="GeneID" id="5228631"/>
<dbReference type="GO" id="GO:0009507">
    <property type="term" value="C:chloroplast"/>
    <property type="evidence" value="ECO:0007669"/>
    <property type="project" value="UniProtKB-SubCell"/>
</dbReference>
<dbReference type="GO" id="GO:0022625">
    <property type="term" value="C:cytosolic large ribosomal subunit"/>
    <property type="evidence" value="ECO:0007669"/>
    <property type="project" value="TreeGrafter"/>
</dbReference>
<dbReference type="GO" id="GO:0019843">
    <property type="term" value="F:rRNA binding"/>
    <property type="evidence" value="ECO:0007669"/>
    <property type="project" value="UniProtKB-UniRule"/>
</dbReference>
<dbReference type="GO" id="GO:0003735">
    <property type="term" value="F:structural constituent of ribosome"/>
    <property type="evidence" value="ECO:0007669"/>
    <property type="project" value="InterPro"/>
</dbReference>
<dbReference type="GO" id="GO:0006412">
    <property type="term" value="P:translation"/>
    <property type="evidence" value="ECO:0007669"/>
    <property type="project" value="UniProtKB-UniRule"/>
</dbReference>
<dbReference type="FunFam" id="3.30.160.810:FF:000001">
    <property type="entry name" value="50S ribosomal protein L3"/>
    <property type="match status" value="1"/>
</dbReference>
<dbReference type="FunFam" id="2.40.30.10:FF:000065">
    <property type="entry name" value="50S ribosomal protein L3, chloroplastic"/>
    <property type="match status" value="1"/>
</dbReference>
<dbReference type="Gene3D" id="3.30.160.810">
    <property type="match status" value="1"/>
</dbReference>
<dbReference type="Gene3D" id="2.40.30.10">
    <property type="entry name" value="Translation factors"/>
    <property type="match status" value="1"/>
</dbReference>
<dbReference type="HAMAP" id="MF_01325_B">
    <property type="entry name" value="Ribosomal_uL3_B"/>
    <property type="match status" value="1"/>
</dbReference>
<dbReference type="InterPro" id="IPR000597">
    <property type="entry name" value="Ribosomal_uL3"/>
</dbReference>
<dbReference type="InterPro" id="IPR019927">
    <property type="entry name" value="Ribosomal_uL3_bac/org-type"/>
</dbReference>
<dbReference type="InterPro" id="IPR009000">
    <property type="entry name" value="Transl_B-barrel_sf"/>
</dbReference>
<dbReference type="NCBIfam" id="TIGR03625">
    <property type="entry name" value="L3_bact"/>
    <property type="match status" value="1"/>
</dbReference>
<dbReference type="PANTHER" id="PTHR11229">
    <property type="entry name" value="50S RIBOSOMAL PROTEIN L3"/>
    <property type="match status" value="1"/>
</dbReference>
<dbReference type="PANTHER" id="PTHR11229:SF16">
    <property type="entry name" value="LARGE RIBOSOMAL SUBUNIT PROTEIN UL3C"/>
    <property type="match status" value="1"/>
</dbReference>
<dbReference type="Pfam" id="PF00297">
    <property type="entry name" value="Ribosomal_L3"/>
    <property type="match status" value="1"/>
</dbReference>
<dbReference type="SUPFAM" id="SSF50447">
    <property type="entry name" value="Translation proteins"/>
    <property type="match status" value="1"/>
</dbReference>
<reference key="1">
    <citation type="journal article" date="2007" name="Mol. Biol. Evol.">
        <title>Plastid genome sequence of the cryptophyte alga Rhodomonas salina CCMP1319: lateral transfer of putative DNA replication machinery and a test of chromist plastid phylogeny.</title>
        <authorList>
            <person name="Khan H."/>
            <person name="Parks N."/>
            <person name="Kozera C."/>
            <person name="Curtis B.A."/>
            <person name="Parsons B.J."/>
            <person name="Bowman S."/>
            <person name="Archibald J.M."/>
        </authorList>
    </citation>
    <scope>NUCLEOTIDE SEQUENCE [LARGE SCALE GENOMIC DNA]</scope>
    <source>
        <strain>CCMP1319 / NEPCC76 / CS-174</strain>
    </source>
</reference>
<keyword id="KW-0150">Chloroplast</keyword>
<keyword id="KW-0934">Plastid</keyword>
<keyword id="KW-0687">Ribonucleoprotein</keyword>
<keyword id="KW-0689">Ribosomal protein</keyword>
<keyword id="KW-0694">RNA-binding</keyword>
<keyword id="KW-0699">rRNA-binding</keyword>
<geneLocation type="chloroplast"/>
<accession>A6MW01</accession>